<organism>
    <name type="scientific">Rhizobium etli (strain CIAT 652)</name>
    <dbReference type="NCBI Taxonomy" id="491916"/>
    <lineage>
        <taxon>Bacteria</taxon>
        <taxon>Pseudomonadati</taxon>
        <taxon>Pseudomonadota</taxon>
        <taxon>Alphaproteobacteria</taxon>
        <taxon>Hyphomicrobiales</taxon>
        <taxon>Rhizobiaceae</taxon>
        <taxon>Rhizobium/Agrobacterium group</taxon>
        <taxon>Rhizobium</taxon>
    </lineage>
</organism>
<feature type="chain" id="PRO_1000096193" description="Elongation factor P">
    <location>
        <begin position="1"/>
        <end position="189"/>
    </location>
</feature>
<evidence type="ECO:0000255" key="1">
    <source>
        <dbReference type="HAMAP-Rule" id="MF_00141"/>
    </source>
</evidence>
<gene>
    <name evidence="1" type="primary">efp</name>
    <name type="ordered locus">RHECIAT_CH0004329</name>
</gene>
<accession>B3PRW7</accession>
<comment type="function">
    <text evidence="1">Involved in peptide bond synthesis. Stimulates efficient translation and peptide-bond synthesis on native or reconstituted 70S ribosomes in vitro. Probably functions indirectly by altering the affinity of the ribosome for aminoacyl-tRNA, thus increasing their reactivity as acceptors for peptidyl transferase.</text>
</comment>
<comment type="pathway">
    <text evidence="1">Protein biosynthesis; polypeptide chain elongation.</text>
</comment>
<comment type="subcellular location">
    <subcellularLocation>
        <location evidence="1">Cytoplasm</location>
    </subcellularLocation>
</comment>
<comment type="similarity">
    <text evidence="1">Belongs to the elongation factor P family.</text>
</comment>
<keyword id="KW-0963">Cytoplasm</keyword>
<keyword id="KW-0251">Elongation factor</keyword>
<keyword id="KW-0648">Protein biosynthesis</keyword>
<dbReference type="EMBL" id="CP001074">
    <property type="protein sequence ID" value="ACE93257.1"/>
    <property type="molecule type" value="Genomic_DNA"/>
</dbReference>
<dbReference type="SMR" id="B3PRW7"/>
<dbReference type="KEGG" id="rec:RHECIAT_CH0004329"/>
<dbReference type="eggNOG" id="COG0231">
    <property type="taxonomic scope" value="Bacteria"/>
</dbReference>
<dbReference type="HOGENOM" id="CLU_074944_1_1_5"/>
<dbReference type="UniPathway" id="UPA00345"/>
<dbReference type="Proteomes" id="UP000008817">
    <property type="component" value="Chromosome"/>
</dbReference>
<dbReference type="GO" id="GO:0005737">
    <property type="term" value="C:cytoplasm"/>
    <property type="evidence" value="ECO:0007669"/>
    <property type="project" value="UniProtKB-SubCell"/>
</dbReference>
<dbReference type="GO" id="GO:0003746">
    <property type="term" value="F:translation elongation factor activity"/>
    <property type="evidence" value="ECO:0007669"/>
    <property type="project" value="UniProtKB-UniRule"/>
</dbReference>
<dbReference type="GO" id="GO:0043043">
    <property type="term" value="P:peptide biosynthetic process"/>
    <property type="evidence" value="ECO:0007669"/>
    <property type="project" value="InterPro"/>
</dbReference>
<dbReference type="CDD" id="cd04470">
    <property type="entry name" value="S1_EF-P_repeat_1"/>
    <property type="match status" value="1"/>
</dbReference>
<dbReference type="CDD" id="cd05794">
    <property type="entry name" value="S1_EF-P_repeat_2"/>
    <property type="match status" value="1"/>
</dbReference>
<dbReference type="FunFam" id="2.40.50.140:FF:000004">
    <property type="entry name" value="Elongation factor P"/>
    <property type="match status" value="1"/>
</dbReference>
<dbReference type="FunFam" id="2.40.50.140:FF:000009">
    <property type="entry name" value="Elongation factor P"/>
    <property type="match status" value="1"/>
</dbReference>
<dbReference type="Gene3D" id="2.30.30.30">
    <property type="match status" value="1"/>
</dbReference>
<dbReference type="Gene3D" id="2.40.50.140">
    <property type="entry name" value="Nucleic acid-binding proteins"/>
    <property type="match status" value="2"/>
</dbReference>
<dbReference type="HAMAP" id="MF_00141">
    <property type="entry name" value="EF_P"/>
    <property type="match status" value="1"/>
</dbReference>
<dbReference type="InterPro" id="IPR015365">
    <property type="entry name" value="Elong-fact-P_C"/>
</dbReference>
<dbReference type="InterPro" id="IPR012340">
    <property type="entry name" value="NA-bd_OB-fold"/>
</dbReference>
<dbReference type="InterPro" id="IPR014722">
    <property type="entry name" value="Rib_uL2_dom2"/>
</dbReference>
<dbReference type="InterPro" id="IPR020599">
    <property type="entry name" value="Transl_elong_fac_P/YeiP"/>
</dbReference>
<dbReference type="InterPro" id="IPR013185">
    <property type="entry name" value="Transl_elong_KOW-like"/>
</dbReference>
<dbReference type="InterPro" id="IPR001059">
    <property type="entry name" value="Transl_elong_P/YeiP_cen"/>
</dbReference>
<dbReference type="InterPro" id="IPR013852">
    <property type="entry name" value="Transl_elong_P/YeiP_CS"/>
</dbReference>
<dbReference type="InterPro" id="IPR011768">
    <property type="entry name" value="Transl_elongation_fac_P"/>
</dbReference>
<dbReference type="InterPro" id="IPR008991">
    <property type="entry name" value="Translation_prot_SH3-like_sf"/>
</dbReference>
<dbReference type="NCBIfam" id="TIGR00038">
    <property type="entry name" value="efp"/>
    <property type="match status" value="1"/>
</dbReference>
<dbReference type="NCBIfam" id="NF001810">
    <property type="entry name" value="PRK00529.1"/>
    <property type="match status" value="1"/>
</dbReference>
<dbReference type="PANTHER" id="PTHR30053">
    <property type="entry name" value="ELONGATION FACTOR P"/>
    <property type="match status" value="1"/>
</dbReference>
<dbReference type="PANTHER" id="PTHR30053:SF14">
    <property type="entry name" value="TRANSLATION ELONGATION FACTOR KOW-LIKE DOMAIN-CONTAINING PROTEIN"/>
    <property type="match status" value="1"/>
</dbReference>
<dbReference type="Pfam" id="PF01132">
    <property type="entry name" value="EFP"/>
    <property type="match status" value="1"/>
</dbReference>
<dbReference type="Pfam" id="PF08207">
    <property type="entry name" value="EFP_N"/>
    <property type="match status" value="1"/>
</dbReference>
<dbReference type="Pfam" id="PF09285">
    <property type="entry name" value="Elong-fact-P_C"/>
    <property type="match status" value="1"/>
</dbReference>
<dbReference type="PIRSF" id="PIRSF005901">
    <property type="entry name" value="EF-P"/>
    <property type="match status" value="1"/>
</dbReference>
<dbReference type="SMART" id="SM01185">
    <property type="entry name" value="EFP"/>
    <property type="match status" value="1"/>
</dbReference>
<dbReference type="SMART" id="SM00841">
    <property type="entry name" value="Elong-fact-P_C"/>
    <property type="match status" value="1"/>
</dbReference>
<dbReference type="SUPFAM" id="SSF50249">
    <property type="entry name" value="Nucleic acid-binding proteins"/>
    <property type="match status" value="2"/>
</dbReference>
<dbReference type="SUPFAM" id="SSF50104">
    <property type="entry name" value="Translation proteins SH3-like domain"/>
    <property type="match status" value="1"/>
</dbReference>
<dbReference type="PROSITE" id="PS01275">
    <property type="entry name" value="EFP"/>
    <property type="match status" value="1"/>
</dbReference>
<sequence length="189" mass="21039">MVKVIASSVRKGNVLDVDGKLYVVLTAQNFHPGKGTPVTQVDMRRIVDGVKVSERWRTTEQVERAFVEDVNFQYLYEDGEGFHFMNPANYDQVVVSQETMGDQKAYLQEGMTCILSIHEGIPLALELPRHVTLEIVETEPVVKGQTASSSYKPAMLSNGIRTSVPPHIDAGTRVVIATEDNSYVERAKD</sequence>
<proteinExistence type="inferred from homology"/>
<reference key="1">
    <citation type="journal article" date="2010" name="Appl. Environ. Microbiol.">
        <title>Conserved symbiotic plasmid DNA sequences in the multireplicon pangenomic structure of Rhizobium etli.</title>
        <authorList>
            <person name="Gonzalez V."/>
            <person name="Acosta J.L."/>
            <person name="Santamaria R.I."/>
            <person name="Bustos P."/>
            <person name="Fernandez J.L."/>
            <person name="Hernandez Gonzalez I.L."/>
            <person name="Diaz R."/>
            <person name="Flores M."/>
            <person name="Palacios R."/>
            <person name="Mora J."/>
            <person name="Davila G."/>
        </authorList>
    </citation>
    <scope>NUCLEOTIDE SEQUENCE [LARGE SCALE GENOMIC DNA]</scope>
    <source>
        <strain>CIAT 652</strain>
    </source>
</reference>
<name>EFP_RHIE6</name>
<protein>
    <recommendedName>
        <fullName evidence="1">Elongation factor P</fullName>
        <shortName evidence="1">EF-P</shortName>
    </recommendedName>
</protein>